<sequence length="357" mass="39128">MIQKRKTRQIRVGNVKIGGDAPIVVQSMTSTKTHDVEATLNQIKRLYEAGCEIVRVAVPHKEDVEALEEIVKKSPMPVIADIHFAPSYAFLSMEKGVHGIRINPGNIGKEEIVREIVEEAKRRGVAVRIGVNSGSLEKDLLEKYGYPSAEALAESALRWSEKFEKWGFTNYKVSIKGSDVLQNVRANLIFAERTDVPLHIGITEAGMGTKGIIKSSVGIGILLYMGIGDTVRVSLTDDPVVEVETAYEILKSLGLRRRGVEIVACPTCGRIEVDLPKVVKEVQEKLSGVKTPLKVAVMGCVVNAIGEAREADIGLACGRGFAWLFKHGKPIKKVDESEMVDELLKEIQNMEKDGGTN</sequence>
<proteinExistence type="evidence at protein level"/>
<reference key="1">
    <citation type="journal article" date="1998" name="Nature">
        <title>The complete genome of the hyperthermophilic bacterium Aquifex aeolicus.</title>
        <authorList>
            <person name="Deckert G."/>
            <person name="Warren P.V."/>
            <person name="Gaasterland T."/>
            <person name="Young W.G."/>
            <person name="Lenox A.L."/>
            <person name="Graham D.E."/>
            <person name="Overbeek R."/>
            <person name="Snead M.A."/>
            <person name="Keller M."/>
            <person name="Aujay M."/>
            <person name="Huber R."/>
            <person name="Feldman R.A."/>
            <person name="Short J.M."/>
            <person name="Olsen G.J."/>
            <person name="Swanson R.V."/>
        </authorList>
    </citation>
    <scope>NUCLEOTIDE SEQUENCE [LARGE SCALE GENOMIC DNA]</scope>
    <source>
        <strain>VF5</strain>
    </source>
</reference>
<reference key="2">
    <citation type="journal article" date="2010" name="J. Mol. Biol.">
        <title>Biosynthesis of isoprenoids: crystal structure of the [4Fe-4S] cluster protein IspG.</title>
        <authorList>
            <person name="Lee M."/>
            <person name="Graewert T."/>
            <person name="Quitterer F."/>
            <person name="Rohdich F."/>
            <person name="Eppinger J."/>
            <person name="Eisenreich W."/>
            <person name="Bacher A."/>
            <person name="Groll M."/>
        </authorList>
    </citation>
    <scope>X-RAY CRYSTALLOGRAPHY (2.70 ANGSTROMS) IN COMPLEX WITH IRON-SULFUR (4FE-4S)</scope>
    <scope>FUNCTION</scope>
    <scope>COFACTOR</scope>
    <scope>SUBUNIT</scope>
    <scope>MUTAGENESIS OF GLN-26; ARG-55; ASP-81; ARG-101; ASN-103; ASN-106; ARG-128; ASN-132; GLU-204; GLU-242; ARG-256 AND GLU-307</scope>
</reference>
<evidence type="ECO:0000255" key="1">
    <source>
        <dbReference type="HAMAP-Rule" id="MF_00159"/>
    </source>
</evidence>
<evidence type="ECO:0000269" key="2">
    <source>
    </source>
</evidence>
<evidence type="ECO:0007829" key="3">
    <source>
        <dbReference type="PDB" id="3NOY"/>
    </source>
</evidence>
<keyword id="KW-0002">3D-structure</keyword>
<keyword id="KW-0004">4Fe-4S</keyword>
<keyword id="KW-0408">Iron</keyword>
<keyword id="KW-0411">Iron-sulfur</keyword>
<keyword id="KW-0414">Isoprene biosynthesis</keyword>
<keyword id="KW-0479">Metal-binding</keyword>
<keyword id="KW-0560">Oxidoreductase</keyword>
<keyword id="KW-1185">Reference proteome</keyword>
<feature type="chain" id="PRO_0000190525" description="4-hydroxy-3-methylbut-2-en-1-yl diphosphate synthase (flavodoxin)">
    <location>
        <begin position="1"/>
        <end position="357"/>
    </location>
</feature>
<feature type="binding site" evidence="1 2">
    <location>
        <position position="265"/>
    </location>
    <ligand>
        <name>[4Fe-4S] cluster</name>
        <dbReference type="ChEBI" id="CHEBI:49883"/>
    </ligand>
</feature>
<feature type="binding site" evidence="1 2">
    <location>
        <position position="268"/>
    </location>
    <ligand>
        <name>[4Fe-4S] cluster</name>
        <dbReference type="ChEBI" id="CHEBI:49883"/>
    </ligand>
</feature>
<feature type="binding site" evidence="1 2">
    <location>
        <position position="300"/>
    </location>
    <ligand>
        <name>[4Fe-4S] cluster</name>
        <dbReference type="ChEBI" id="CHEBI:49883"/>
    </ligand>
</feature>
<feature type="binding site" evidence="1 2">
    <location>
        <position position="307"/>
    </location>
    <ligand>
        <name>[4Fe-4S] cluster</name>
        <dbReference type="ChEBI" id="CHEBI:49883"/>
    </ligand>
</feature>
<feature type="mutagenesis site" description="Reduces activity 100-fold." evidence="2">
    <original>Q</original>
    <variation>E</variation>
    <location>
        <position position="26"/>
    </location>
</feature>
<feature type="mutagenesis site" description="Loss of activity." evidence="2">
    <original>R</original>
    <variation>K</variation>
    <location>
        <position position="55"/>
    </location>
</feature>
<feature type="mutagenesis site" description="Loss of activity." evidence="2">
    <original>D</original>
    <variation>N</variation>
    <location>
        <position position="81"/>
    </location>
</feature>
<feature type="mutagenesis site" description="Reduces activity 500-fold." evidence="2">
    <original>R</original>
    <variation>K</variation>
    <location>
        <position position="101"/>
    </location>
</feature>
<feature type="mutagenesis site" description="Reduces activity 200-fold." evidence="2">
    <original>N</original>
    <variation>D</variation>
    <location>
        <position position="103"/>
    </location>
</feature>
<feature type="mutagenesis site" description="Reduces activity 2-fold." evidence="2">
    <original>N</original>
    <variation>D</variation>
    <location>
        <position position="106"/>
    </location>
</feature>
<feature type="mutagenesis site" description="Loss of activity." evidence="2">
    <original>R</original>
    <variation>K</variation>
    <location>
        <position position="128"/>
    </location>
</feature>
<feature type="mutagenesis site" description="Loss of activity." evidence="2">
    <original>N</original>
    <variation>D</variation>
    <location>
        <position position="132"/>
    </location>
</feature>
<feature type="mutagenesis site" description="Loss of activity." evidence="2">
    <original>E</original>
    <variation>Q</variation>
    <location>
        <position position="204"/>
    </location>
</feature>
<feature type="mutagenesis site" description="Reduces activity 12-fold." evidence="2">
    <original>E</original>
    <variation>Q</variation>
    <location>
        <position position="242"/>
    </location>
</feature>
<feature type="mutagenesis site" description="Reduces activity 2-fold." evidence="2">
    <original>R</original>
    <variation>K</variation>
    <location>
        <position position="256"/>
    </location>
</feature>
<feature type="mutagenesis site" description="Loss of activity." evidence="2">
    <original>E</original>
    <variation>C</variation>
    <location>
        <position position="307"/>
    </location>
</feature>
<feature type="mutagenesis site" description="Reduces activity 500-fold." evidence="2">
    <original>E</original>
    <variation>D</variation>
    <location>
        <position position="307"/>
    </location>
</feature>
<feature type="mutagenesis site" description="Reduces activity 4-fold." evidence="2">
    <original>E</original>
    <variation>Q</variation>
    <location>
        <position position="307"/>
    </location>
</feature>
<feature type="strand" evidence="3">
    <location>
        <begin position="10"/>
        <end position="12"/>
    </location>
</feature>
<feature type="strand" evidence="3">
    <location>
        <begin position="15"/>
        <end position="18"/>
    </location>
</feature>
<feature type="strand" evidence="3">
    <location>
        <begin position="24"/>
        <end position="28"/>
    </location>
</feature>
<feature type="helix" evidence="3">
    <location>
        <begin position="36"/>
        <end position="48"/>
    </location>
</feature>
<feature type="strand" evidence="3">
    <location>
        <begin position="53"/>
        <end position="57"/>
    </location>
</feature>
<feature type="helix" evidence="3">
    <location>
        <begin position="61"/>
        <end position="73"/>
    </location>
</feature>
<feature type="strand" evidence="3">
    <location>
        <begin position="78"/>
        <end position="81"/>
    </location>
</feature>
<feature type="helix" evidence="3">
    <location>
        <begin position="86"/>
        <end position="94"/>
    </location>
</feature>
<feature type="strand" evidence="3">
    <location>
        <begin position="98"/>
        <end position="102"/>
    </location>
</feature>
<feature type="helix" evidence="3">
    <location>
        <begin position="104"/>
        <end position="107"/>
    </location>
</feature>
<feature type="helix" evidence="3">
    <location>
        <begin position="110"/>
        <end position="123"/>
    </location>
</feature>
<feature type="strand" evidence="3">
    <location>
        <begin position="126"/>
        <end position="132"/>
    </location>
</feature>
<feature type="helix" evidence="3">
    <location>
        <begin position="133"/>
        <end position="135"/>
    </location>
</feature>
<feature type="helix" evidence="3">
    <location>
        <begin position="138"/>
        <end position="144"/>
    </location>
</feature>
<feature type="helix" evidence="3">
    <location>
        <begin position="149"/>
        <end position="165"/>
    </location>
</feature>
<feature type="strand" evidence="3">
    <location>
        <begin position="171"/>
        <end position="176"/>
    </location>
</feature>
<feature type="helix" evidence="3">
    <location>
        <begin position="180"/>
        <end position="193"/>
    </location>
</feature>
<feature type="strand" evidence="3">
    <location>
        <begin position="198"/>
        <end position="200"/>
    </location>
</feature>
<feature type="helix" evidence="3">
    <location>
        <begin position="208"/>
        <end position="224"/>
    </location>
</feature>
<feature type="strand" evidence="3">
    <location>
        <begin position="229"/>
        <end position="231"/>
    </location>
</feature>
<feature type="helix" evidence="3">
    <location>
        <begin position="239"/>
        <end position="252"/>
    </location>
</feature>
<feature type="strand" evidence="3">
    <location>
        <begin position="261"/>
        <end position="264"/>
    </location>
</feature>
<feature type="helix" evidence="3">
    <location>
        <begin position="275"/>
        <end position="285"/>
    </location>
</feature>
<feature type="turn" evidence="3">
    <location>
        <begin position="286"/>
        <end position="288"/>
    </location>
</feature>
<feature type="strand" evidence="3">
    <location>
        <begin position="294"/>
        <end position="301"/>
    </location>
</feature>
<feature type="helix" evidence="3">
    <location>
        <begin position="302"/>
        <end position="307"/>
    </location>
</feature>
<feature type="turn" evidence="3">
    <location>
        <begin position="308"/>
        <end position="310"/>
    </location>
</feature>
<feature type="strand" evidence="3">
    <location>
        <begin position="312"/>
        <end position="317"/>
    </location>
</feature>
<feature type="strand" evidence="3">
    <location>
        <begin position="319"/>
        <end position="326"/>
    </location>
</feature>
<feature type="strand" evidence="3">
    <location>
        <begin position="329"/>
        <end position="336"/>
    </location>
</feature>
<feature type="helix" evidence="3">
    <location>
        <begin position="338"/>
        <end position="348"/>
    </location>
</feature>
<gene>
    <name evidence="1" type="primary">ispG</name>
    <name type="synonym">gcpE</name>
    <name type="ordered locus">aq_1540</name>
</gene>
<protein>
    <recommendedName>
        <fullName evidence="1">4-hydroxy-3-methylbut-2-en-1-yl diphosphate synthase (flavodoxin)</fullName>
        <ecNumber evidence="1">1.17.7.3</ecNumber>
    </recommendedName>
    <alternativeName>
        <fullName evidence="1">1-hydroxy-2-methyl-2-(E)-butenyl 4-diphosphate synthase</fullName>
    </alternativeName>
</protein>
<name>ISPG_AQUAE</name>
<accession>O67496</accession>
<organism>
    <name type="scientific">Aquifex aeolicus (strain VF5)</name>
    <dbReference type="NCBI Taxonomy" id="224324"/>
    <lineage>
        <taxon>Bacteria</taxon>
        <taxon>Pseudomonadati</taxon>
        <taxon>Aquificota</taxon>
        <taxon>Aquificia</taxon>
        <taxon>Aquificales</taxon>
        <taxon>Aquificaceae</taxon>
        <taxon>Aquifex</taxon>
    </lineage>
</organism>
<dbReference type="EC" id="1.17.7.3" evidence="1"/>
<dbReference type="EMBL" id="AE000657">
    <property type="protein sequence ID" value="AAC07467.1"/>
    <property type="molecule type" value="Genomic_DNA"/>
</dbReference>
<dbReference type="PIR" id="F70433">
    <property type="entry name" value="F70433"/>
</dbReference>
<dbReference type="RefSeq" id="NP_214061.1">
    <property type="nucleotide sequence ID" value="NC_000918.1"/>
</dbReference>
<dbReference type="RefSeq" id="WP_010880999.1">
    <property type="nucleotide sequence ID" value="NC_000918.1"/>
</dbReference>
<dbReference type="PDB" id="3NOY">
    <property type="method" value="X-ray"/>
    <property type="resolution" value="2.70 A"/>
    <property type="chains" value="A/B/C/D=1-357"/>
</dbReference>
<dbReference type="PDBsum" id="3NOY"/>
<dbReference type="SMR" id="O67496"/>
<dbReference type="FunCoup" id="O67496">
    <property type="interactions" value="273"/>
</dbReference>
<dbReference type="STRING" id="224324.aq_1540"/>
<dbReference type="EnsemblBacteria" id="AAC07467">
    <property type="protein sequence ID" value="AAC07467"/>
    <property type="gene ID" value="aq_1540"/>
</dbReference>
<dbReference type="KEGG" id="aae:aq_1540"/>
<dbReference type="PATRIC" id="fig|224324.8.peg.1195"/>
<dbReference type="eggNOG" id="COG0821">
    <property type="taxonomic scope" value="Bacteria"/>
</dbReference>
<dbReference type="HOGENOM" id="CLU_042258_0_0_0"/>
<dbReference type="InParanoid" id="O67496"/>
<dbReference type="OrthoDB" id="9803214at2"/>
<dbReference type="UniPathway" id="UPA00056">
    <property type="reaction ID" value="UER00096"/>
</dbReference>
<dbReference type="EvolutionaryTrace" id="O67496"/>
<dbReference type="Proteomes" id="UP000000798">
    <property type="component" value="Chromosome"/>
</dbReference>
<dbReference type="GO" id="GO:0051539">
    <property type="term" value="F:4 iron, 4 sulfur cluster binding"/>
    <property type="evidence" value="ECO:0007669"/>
    <property type="project" value="UniProtKB-UniRule"/>
</dbReference>
<dbReference type="GO" id="GO:0046429">
    <property type="term" value="F:4-hydroxy-3-methylbut-2-en-1-yl diphosphate synthase activity (ferredoxin)"/>
    <property type="evidence" value="ECO:0000318"/>
    <property type="project" value="GO_Central"/>
</dbReference>
<dbReference type="GO" id="GO:0141197">
    <property type="term" value="F:4-hydroxy-3-methylbut-2-enyl-diphosphate synthase activity (flavodoxin)"/>
    <property type="evidence" value="ECO:0007669"/>
    <property type="project" value="UniProtKB-EC"/>
</dbReference>
<dbReference type="GO" id="GO:0005506">
    <property type="term" value="F:iron ion binding"/>
    <property type="evidence" value="ECO:0007669"/>
    <property type="project" value="InterPro"/>
</dbReference>
<dbReference type="GO" id="GO:0019288">
    <property type="term" value="P:isopentenyl diphosphate biosynthetic process, methylerythritol 4-phosphate pathway"/>
    <property type="evidence" value="ECO:0000318"/>
    <property type="project" value="GO_Central"/>
</dbReference>
<dbReference type="GO" id="GO:0016114">
    <property type="term" value="P:terpenoid biosynthetic process"/>
    <property type="evidence" value="ECO:0007669"/>
    <property type="project" value="InterPro"/>
</dbReference>
<dbReference type="FunFam" id="3.20.20.20:FF:000001">
    <property type="entry name" value="4-hydroxy-3-methylbut-2-en-1-yl diphosphate synthase (flavodoxin)"/>
    <property type="match status" value="1"/>
</dbReference>
<dbReference type="FunFam" id="3.30.413.10:FF:000005">
    <property type="entry name" value="4-hydroxy-3-methylbut-2-en-1-yl diphosphate synthase (flavodoxin)"/>
    <property type="match status" value="1"/>
</dbReference>
<dbReference type="Gene3D" id="3.20.20.20">
    <property type="entry name" value="Dihydropteroate synthase-like"/>
    <property type="match status" value="1"/>
</dbReference>
<dbReference type="Gene3D" id="3.30.413.10">
    <property type="entry name" value="Sulfite Reductase Hemoprotein, domain 1"/>
    <property type="match status" value="1"/>
</dbReference>
<dbReference type="HAMAP" id="MF_00159">
    <property type="entry name" value="IspG"/>
    <property type="match status" value="1"/>
</dbReference>
<dbReference type="InterPro" id="IPR011005">
    <property type="entry name" value="Dihydropteroate_synth-like_sf"/>
</dbReference>
<dbReference type="InterPro" id="IPR036849">
    <property type="entry name" value="Enolase-like_C_sf"/>
</dbReference>
<dbReference type="InterPro" id="IPR016425">
    <property type="entry name" value="IspG_bac"/>
</dbReference>
<dbReference type="InterPro" id="IPR004588">
    <property type="entry name" value="IspG_bac-typ"/>
</dbReference>
<dbReference type="InterPro" id="IPR045854">
    <property type="entry name" value="NO2/SO3_Rdtase_4Fe4S_sf"/>
</dbReference>
<dbReference type="NCBIfam" id="TIGR00612">
    <property type="entry name" value="ispG_gcpE"/>
    <property type="match status" value="1"/>
</dbReference>
<dbReference type="NCBIfam" id="NF001540">
    <property type="entry name" value="PRK00366.1"/>
    <property type="match status" value="1"/>
</dbReference>
<dbReference type="PANTHER" id="PTHR30454">
    <property type="entry name" value="4-HYDROXY-3-METHYLBUT-2-EN-1-YL DIPHOSPHATE SYNTHASE"/>
    <property type="match status" value="1"/>
</dbReference>
<dbReference type="PANTHER" id="PTHR30454:SF0">
    <property type="entry name" value="4-HYDROXY-3-METHYLBUT-2-EN-1-YL DIPHOSPHATE SYNTHASE (FERREDOXIN), CHLOROPLASTIC"/>
    <property type="match status" value="1"/>
</dbReference>
<dbReference type="Pfam" id="PF04551">
    <property type="entry name" value="GcpE"/>
    <property type="match status" value="1"/>
</dbReference>
<dbReference type="PIRSF" id="PIRSF004640">
    <property type="entry name" value="IspG"/>
    <property type="match status" value="1"/>
</dbReference>
<dbReference type="SUPFAM" id="SSF51604">
    <property type="entry name" value="Enolase C-terminal domain-like"/>
    <property type="match status" value="1"/>
</dbReference>
<dbReference type="SUPFAM" id="SSF56014">
    <property type="entry name" value="Nitrite and sulphite reductase 4Fe-4S domain-like"/>
    <property type="match status" value="1"/>
</dbReference>
<comment type="function">
    <text evidence="1 2">Converts 2C-methyl-D-erythritol 2,4-cyclodiphosphate (ME-2,4cPP) into 1-hydroxy-2-methyl-2-(E)-butenyl 4-diphosphate.</text>
</comment>
<comment type="catalytic activity">
    <reaction evidence="1">
        <text>(2E)-4-hydroxy-3-methylbut-2-enyl diphosphate + oxidized [flavodoxin] + H2O + 2 H(+) = 2-C-methyl-D-erythritol 2,4-cyclic diphosphate + reduced [flavodoxin]</text>
        <dbReference type="Rhea" id="RHEA:43604"/>
        <dbReference type="Rhea" id="RHEA-COMP:10622"/>
        <dbReference type="Rhea" id="RHEA-COMP:10623"/>
        <dbReference type="ChEBI" id="CHEBI:15377"/>
        <dbReference type="ChEBI" id="CHEBI:15378"/>
        <dbReference type="ChEBI" id="CHEBI:57618"/>
        <dbReference type="ChEBI" id="CHEBI:58210"/>
        <dbReference type="ChEBI" id="CHEBI:58483"/>
        <dbReference type="ChEBI" id="CHEBI:128753"/>
        <dbReference type="EC" id="1.17.7.3"/>
    </reaction>
</comment>
<comment type="cofactor">
    <cofactor evidence="1 2">
        <name>[4Fe-4S] cluster</name>
        <dbReference type="ChEBI" id="CHEBI:49883"/>
    </cofactor>
    <text evidence="1 2">Binds 1 [4Fe-4S] cluster per subunit.</text>
</comment>
<comment type="pathway">
    <text evidence="1">Isoprenoid biosynthesis; isopentenyl diphosphate biosynthesis via DXP pathway; isopentenyl diphosphate from 1-deoxy-D-xylulose 5-phosphate: step 5/6.</text>
</comment>
<comment type="subunit">
    <text evidence="2">Homodimer.</text>
</comment>
<comment type="similarity">
    <text evidence="1">Belongs to the IspG family.</text>
</comment>